<organism>
    <name type="scientific">Arabidopsis thaliana</name>
    <name type="common">Mouse-ear cress</name>
    <dbReference type="NCBI Taxonomy" id="3702"/>
    <lineage>
        <taxon>Eukaryota</taxon>
        <taxon>Viridiplantae</taxon>
        <taxon>Streptophyta</taxon>
        <taxon>Embryophyta</taxon>
        <taxon>Tracheophyta</taxon>
        <taxon>Spermatophyta</taxon>
        <taxon>Magnoliopsida</taxon>
        <taxon>eudicotyledons</taxon>
        <taxon>Gunneridae</taxon>
        <taxon>Pentapetalae</taxon>
        <taxon>rosids</taxon>
        <taxon>malvids</taxon>
        <taxon>Brassicales</taxon>
        <taxon>Brassicaceae</taxon>
        <taxon>Camelineae</taxon>
        <taxon>Arabidopsis</taxon>
    </lineage>
</organism>
<comment type="subunit">
    <text>May form oligomeric structures.</text>
</comment>
<comment type="subcellular location">
    <subcellularLocation>
        <location evidence="2">Cytoplasm</location>
    </subcellularLocation>
</comment>
<comment type="similarity">
    <text evidence="1">Belongs to the small heat shock protein (HSP20) family.</text>
</comment>
<accession>Q9SYG1</accession>
<accession>Q8L8R5</accession>
<proteinExistence type="evidence at transcript level"/>
<evidence type="ECO:0000255" key="1">
    <source>
        <dbReference type="PROSITE-ProRule" id="PRU00285"/>
    </source>
</evidence>
<evidence type="ECO:0000305" key="2"/>
<reference key="1">
    <citation type="journal article" date="2000" name="Nature">
        <title>Sequence and analysis of chromosome 1 of the plant Arabidopsis thaliana.</title>
        <authorList>
            <person name="Theologis A."/>
            <person name="Ecker J.R."/>
            <person name="Palm C.J."/>
            <person name="Federspiel N.A."/>
            <person name="Kaul S."/>
            <person name="White O."/>
            <person name="Alonso J."/>
            <person name="Altafi H."/>
            <person name="Araujo R."/>
            <person name="Bowman C.L."/>
            <person name="Brooks S.Y."/>
            <person name="Buehler E."/>
            <person name="Chan A."/>
            <person name="Chao Q."/>
            <person name="Chen H."/>
            <person name="Cheuk R.F."/>
            <person name="Chin C.W."/>
            <person name="Chung M.K."/>
            <person name="Conn L."/>
            <person name="Conway A.B."/>
            <person name="Conway A.R."/>
            <person name="Creasy T.H."/>
            <person name="Dewar K."/>
            <person name="Dunn P."/>
            <person name="Etgu P."/>
            <person name="Feldblyum T.V."/>
            <person name="Feng J.-D."/>
            <person name="Fong B."/>
            <person name="Fujii C.Y."/>
            <person name="Gill J.E."/>
            <person name="Goldsmith A.D."/>
            <person name="Haas B."/>
            <person name="Hansen N.F."/>
            <person name="Hughes B."/>
            <person name="Huizar L."/>
            <person name="Hunter J.L."/>
            <person name="Jenkins J."/>
            <person name="Johnson-Hopson C."/>
            <person name="Khan S."/>
            <person name="Khaykin E."/>
            <person name="Kim C.J."/>
            <person name="Koo H.L."/>
            <person name="Kremenetskaia I."/>
            <person name="Kurtz D.B."/>
            <person name="Kwan A."/>
            <person name="Lam B."/>
            <person name="Langin-Hooper S."/>
            <person name="Lee A."/>
            <person name="Lee J.M."/>
            <person name="Lenz C.A."/>
            <person name="Li J.H."/>
            <person name="Li Y.-P."/>
            <person name="Lin X."/>
            <person name="Liu S.X."/>
            <person name="Liu Z.A."/>
            <person name="Luros J.S."/>
            <person name="Maiti R."/>
            <person name="Marziali A."/>
            <person name="Militscher J."/>
            <person name="Miranda M."/>
            <person name="Nguyen M."/>
            <person name="Nierman W.C."/>
            <person name="Osborne B.I."/>
            <person name="Pai G."/>
            <person name="Peterson J."/>
            <person name="Pham P.K."/>
            <person name="Rizzo M."/>
            <person name="Rooney T."/>
            <person name="Rowley D."/>
            <person name="Sakano H."/>
            <person name="Salzberg S.L."/>
            <person name="Schwartz J.R."/>
            <person name="Shinn P."/>
            <person name="Southwick A.M."/>
            <person name="Sun H."/>
            <person name="Tallon L.J."/>
            <person name="Tambunga G."/>
            <person name="Toriumi M.J."/>
            <person name="Town C.D."/>
            <person name="Utterback T."/>
            <person name="Van Aken S."/>
            <person name="Vaysberg M."/>
            <person name="Vysotskaia V.S."/>
            <person name="Walker M."/>
            <person name="Wu D."/>
            <person name="Yu G."/>
            <person name="Fraser C.M."/>
            <person name="Venter J.C."/>
            <person name="Davis R.W."/>
        </authorList>
    </citation>
    <scope>NUCLEOTIDE SEQUENCE [LARGE SCALE GENOMIC DNA]</scope>
    <source>
        <strain>cv. Columbia</strain>
    </source>
</reference>
<reference key="2">
    <citation type="journal article" date="2017" name="Plant J.">
        <title>Araport11: a complete reannotation of the Arabidopsis thaliana reference genome.</title>
        <authorList>
            <person name="Cheng C.Y."/>
            <person name="Krishnakumar V."/>
            <person name="Chan A.P."/>
            <person name="Thibaud-Nissen F."/>
            <person name="Schobel S."/>
            <person name="Town C.D."/>
        </authorList>
    </citation>
    <scope>GENOME REANNOTATION</scope>
    <source>
        <strain>cv. Columbia</strain>
    </source>
</reference>
<reference key="3">
    <citation type="journal article" date="2002" name="Science">
        <title>Functional annotation of a full-length Arabidopsis cDNA collection.</title>
        <authorList>
            <person name="Seki M."/>
            <person name="Narusaka M."/>
            <person name="Kamiya A."/>
            <person name="Ishida J."/>
            <person name="Satou M."/>
            <person name="Sakurai T."/>
            <person name="Nakajima M."/>
            <person name="Enju A."/>
            <person name="Akiyama K."/>
            <person name="Oono Y."/>
            <person name="Muramatsu M."/>
            <person name="Hayashizaki Y."/>
            <person name="Kawai J."/>
            <person name="Carninci P."/>
            <person name="Itoh M."/>
            <person name="Ishii Y."/>
            <person name="Arakawa T."/>
            <person name="Shibata K."/>
            <person name="Shinagawa A."/>
            <person name="Shinozaki K."/>
        </authorList>
    </citation>
    <scope>NUCLEOTIDE SEQUENCE [LARGE SCALE MRNA]</scope>
    <source>
        <strain>cv. Columbia</strain>
    </source>
</reference>
<reference key="4">
    <citation type="journal article" date="2003" name="Science">
        <title>Empirical analysis of transcriptional activity in the Arabidopsis genome.</title>
        <authorList>
            <person name="Yamada K."/>
            <person name="Lim J."/>
            <person name="Dale J.M."/>
            <person name="Chen H."/>
            <person name="Shinn P."/>
            <person name="Palm C.J."/>
            <person name="Southwick A.M."/>
            <person name="Wu H.C."/>
            <person name="Kim C.J."/>
            <person name="Nguyen M."/>
            <person name="Pham P.K."/>
            <person name="Cheuk R.F."/>
            <person name="Karlin-Newmann G."/>
            <person name="Liu S.X."/>
            <person name="Lam B."/>
            <person name="Sakano H."/>
            <person name="Wu T."/>
            <person name="Yu G."/>
            <person name="Miranda M."/>
            <person name="Quach H.L."/>
            <person name="Tripp M."/>
            <person name="Chang C.H."/>
            <person name="Lee J.M."/>
            <person name="Toriumi M.J."/>
            <person name="Chan M.M."/>
            <person name="Tang C.C."/>
            <person name="Onodera C.S."/>
            <person name="Deng J.M."/>
            <person name="Akiyama K."/>
            <person name="Ansari Y."/>
            <person name="Arakawa T."/>
            <person name="Banh J."/>
            <person name="Banno F."/>
            <person name="Bowser L."/>
            <person name="Brooks S.Y."/>
            <person name="Carninci P."/>
            <person name="Chao Q."/>
            <person name="Choy N."/>
            <person name="Enju A."/>
            <person name="Goldsmith A.D."/>
            <person name="Gurjal M."/>
            <person name="Hansen N.F."/>
            <person name="Hayashizaki Y."/>
            <person name="Johnson-Hopson C."/>
            <person name="Hsuan V.W."/>
            <person name="Iida K."/>
            <person name="Karnes M."/>
            <person name="Khan S."/>
            <person name="Koesema E."/>
            <person name="Ishida J."/>
            <person name="Jiang P.X."/>
            <person name="Jones T."/>
            <person name="Kawai J."/>
            <person name="Kamiya A."/>
            <person name="Meyers C."/>
            <person name="Nakajima M."/>
            <person name="Narusaka M."/>
            <person name="Seki M."/>
            <person name="Sakurai T."/>
            <person name="Satou M."/>
            <person name="Tamse R."/>
            <person name="Vaysberg M."/>
            <person name="Wallender E.K."/>
            <person name="Wong C."/>
            <person name="Yamamura Y."/>
            <person name="Yuan S."/>
            <person name="Shinozaki K."/>
            <person name="Davis R.W."/>
            <person name="Theologis A."/>
            <person name="Ecker J.R."/>
        </authorList>
    </citation>
    <scope>NUCLEOTIDE SEQUENCE [LARGE SCALE MRNA]</scope>
    <source>
        <strain>cv. Columbia</strain>
    </source>
</reference>
<reference key="5">
    <citation type="submission" date="2002-03" db="EMBL/GenBank/DDBJ databases">
        <title>Full-length cDNA from Arabidopsis thaliana.</title>
        <authorList>
            <person name="Brover V.V."/>
            <person name="Troukhan M.E."/>
            <person name="Alexandrov N.A."/>
            <person name="Lu Y.-P."/>
            <person name="Flavell R.B."/>
            <person name="Feldmann K.A."/>
        </authorList>
    </citation>
    <scope>NUCLEOTIDE SEQUENCE [LARGE SCALE MRNA]</scope>
</reference>
<dbReference type="EMBL" id="AC006577">
    <property type="protein sequence ID" value="AAD25777.1"/>
    <property type="molecule type" value="Genomic_DNA"/>
</dbReference>
<dbReference type="EMBL" id="CP002684">
    <property type="protein sequence ID" value="AEE33041.1"/>
    <property type="molecule type" value="Genomic_DNA"/>
</dbReference>
<dbReference type="EMBL" id="CP002684">
    <property type="protein sequence ID" value="ANM61019.1"/>
    <property type="molecule type" value="Genomic_DNA"/>
</dbReference>
<dbReference type="EMBL" id="AK119081">
    <property type="protein sequence ID" value="BAC43657.1"/>
    <property type="molecule type" value="mRNA"/>
</dbReference>
<dbReference type="EMBL" id="AF348586">
    <property type="protein sequence ID" value="AAK15557.1"/>
    <property type="molecule type" value="mRNA"/>
</dbReference>
<dbReference type="EMBL" id="AY088858">
    <property type="protein sequence ID" value="AAM67165.1"/>
    <property type="molecule type" value="mRNA"/>
</dbReference>
<dbReference type="PIR" id="B96581">
    <property type="entry name" value="B96581"/>
</dbReference>
<dbReference type="RefSeq" id="NP_001323264.1">
    <property type="nucleotide sequence ID" value="NM_001333629.1"/>
</dbReference>
<dbReference type="RefSeq" id="NP_175807.1">
    <property type="nucleotide sequence ID" value="NM_104282.4"/>
</dbReference>
<dbReference type="SMR" id="Q9SYG1"/>
<dbReference type="FunCoup" id="Q9SYG1">
    <property type="interactions" value="118"/>
</dbReference>
<dbReference type="STRING" id="3702.Q9SYG1"/>
<dbReference type="iPTMnet" id="Q9SYG1"/>
<dbReference type="PaxDb" id="3702-AT1G54050.1"/>
<dbReference type="ProteomicsDB" id="230146"/>
<dbReference type="EnsemblPlants" id="AT1G54050.1">
    <property type="protein sequence ID" value="AT1G54050.1"/>
    <property type="gene ID" value="AT1G54050"/>
</dbReference>
<dbReference type="EnsemblPlants" id="AT1G54050.2">
    <property type="protein sequence ID" value="AT1G54050.2"/>
    <property type="gene ID" value="AT1G54050"/>
</dbReference>
<dbReference type="GeneID" id="841843"/>
<dbReference type="Gramene" id="AT1G54050.1">
    <property type="protein sequence ID" value="AT1G54050.1"/>
    <property type="gene ID" value="AT1G54050"/>
</dbReference>
<dbReference type="Gramene" id="AT1G54050.2">
    <property type="protein sequence ID" value="AT1G54050.2"/>
    <property type="gene ID" value="AT1G54050"/>
</dbReference>
<dbReference type="KEGG" id="ath:AT1G54050"/>
<dbReference type="Araport" id="AT1G54050"/>
<dbReference type="TAIR" id="AT1G54050">
    <property type="gene designation" value="HSP17.4B"/>
</dbReference>
<dbReference type="eggNOG" id="KOG0710">
    <property type="taxonomic scope" value="Eukaryota"/>
</dbReference>
<dbReference type="HOGENOM" id="CLU_046737_5_1_1"/>
<dbReference type="InParanoid" id="Q9SYG1"/>
<dbReference type="OMA" id="HETSENR"/>
<dbReference type="PhylomeDB" id="Q9SYG1"/>
<dbReference type="PRO" id="PR:Q9SYG1"/>
<dbReference type="Proteomes" id="UP000006548">
    <property type="component" value="Chromosome 1"/>
</dbReference>
<dbReference type="ExpressionAtlas" id="Q9SYG1">
    <property type="expression patterns" value="baseline and differential"/>
</dbReference>
<dbReference type="GO" id="GO:0005737">
    <property type="term" value="C:cytoplasm"/>
    <property type="evidence" value="ECO:0007669"/>
    <property type="project" value="UniProtKB-SubCell"/>
</dbReference>
<dbReference type="GO" id="GO:0071456">
    <property type="term" value="P:cellular response to hypoxia"/>
    <property type="evidence" value="ECO:0007007"/>
    <property type="project" value="TAIR"/>
</dbReference>
<dbReference type="CDD" id="cd06464">
    <property type="entry name" value="ACD_sHsps-like"/>
    <property type="match status" value="1"/>
</dbReference>
<dbReference type="FunFam" id="2.60.40.790:FF:000054">
    <property type="entry name" value="17.4 kDa class III heat shock protein isoform A"/>
    <property type="match status" value="1"/>
</dbReference>
<dbReference type="Gene3D" id="2.60.40.790">
    <property type="match status" value="1"/>
</dbReference>
<dbReference type="InterPro" id="IPR002068">
    <property type="entry name" value="A-crystallin/Hsp20_dom"/>
</dbReference>
<dbReference type="InterPro" id="IPR008978">
    <property type="entry name" value="HSP20-like_chaperone"/>
</dbReference>
<dbReference type="InterPro" id="IPR031107">
    <property type="entry name" value="Small_HSP"/>
</dbReference>
<dbReference type="PANTHER" id="PTHR11527">
    <property type="entry name" value="HEAT-SHOCK PROTEIN 20 FAMILY MEMBER"/>
    <property type="match status" value="1"/>
</dbReference>
<dbReference type="Pfam" id="PF00011">
    <property type="entry name" value="HSP20"/>
    <property type="match status" value="1"/>
</dbReference>
<dbReference type="SUPFAM" id="SSF49764">
    <property type="entry name" value="HSP20-like chaperones"/>
    <property type="match status" value="1"/>
</dbReference>
<dbReference type="PROSITE" id="PS01031">
    <property type="entry name" value="SHSP"/>
    <property type="match status" value="1"/>
</dbReference>
<keyword id="KW-0963">Cytoplasm</keyword>
<keyword id="KW-1185">Reference proteome</keyword>
<keyword id="KW-0346">Stress response</keyword>
<protein>
    <recommendedName>
        <fullName>17.4 kDa class III heat shock protein</fullName>
    </recommendedName>
    <alternativeName>
        <fullName>17.4 kDa heat shock protein 2</fullName>
        <shortName>AtHsp17.4B</shortName>
    </alternativeName>
</protein>
<sequence>MSAVAINHFFGLPEAIEKLILPISRSGESNNESRGRGSSNNIPIDILESPKEYIFYLDIPGISKSDIQVTVEEERTLVIKSNGKRKRDDDESEEGSKYIRLERRLAQNLVKKFRLPEDADMASVTAKYQEGVLTVVIKKLPPQPPKPKTVQIAVS</sequence>
<name>HS174_ARATH</name>
<gene>
    <name type="primary">HSP17.4B</name>
    <name type="ordered locus">At1g54050</name>
    <name type="ORF">F15I1.13</name>
</gene>
<feature type="chain" id="PRO_0000387487" description="17.4 kDa class III heat shock protein">
    <location>
        <begin position="1"/>
        <end position="155"/>
    </location>
</feature>
<feature type="domain" description="sHSP" evidence="1">
    <location>
        <begin position="35"/>
        <end position="155"/>
    </location>
</feature>
<feature type="sequence conflict" description="In Ref. 5; AAM67165." evidence="2" ref="5">
    <original>A</original>
    <variation>T</variation>
    <location>
        <position position="15"/>
    </location>
</feature>
<feature type="sequence conflict" description="In Ref. 5; AAM67165." evidence="2" ref="5">
    <original>E</original>
    <variation>K</variation>
    <location>
        <position position="52"/>
    </location>
</feature>
<feature type="sequence conflict" description="In Ref. 5; AAM67165." evidence="2" ref="5">
    <original>V</original>
    <variation>I</variation>
    <location>
        <position position="132"/>
    </location>
</feature>